<sequence length="161" mass="18711">MDFFEINLTAVVQLLNFLFLLWILNKLLYKPFLGMMEKRKEKIEGEIVEAEKLRKQAEEIKKNAEEELKNARIRAEQIIASANSESEKIVEEAKQKAQKEAEKILQNAYLEIEKQKQEALAQVQTIATELAINLAMKVLKGTLDEKAKREYLAKVIKEYEK</sequence>
<reference key="1">
    <citation type="submission" date="2007-07" db="EMBL/GenBank/DDBJ databases">
        <title>Complete sequence of Fervidobacterium nodosum Rt17-B1.</title>
        <authorList>
            <consortium name="US DOE Joint Genome Institute"/>
            <person name="Copeland A."/>
            <person name="Lucas S."/>
            <person name="Lapidus A."/>
            <person name="Barry K."/>
            <person name="Glavina del Rio T."/>
            <person name="Dalin E."/>
            <person name="Tice H."/>
            <person name="Pitluck S."/>
            <person name="Saunders E."/>
            <person name="Brettin T."/>
            <person name="Bruce D."/>
            <person name="Detter J.C."/>
            <person name="Han C."/>
            <person name="Schmutz J."/>
            <person name="Larimer F."/>
            <person name="Land M."/>
            <person name="Hauser L."/>
            <person name="Kyrpides N."/>
            <person name="Mikhailova N."/>
            <person name="Nelson K."/>
            <person name="Gogarten J.P."/>
            <person name="Noll K."/>
            <person name="Richardson P."/>
        </authorList>
    </citation>
    <scope>NUCLEOTIDE SEQUENCE [LARGE SCALE GENOMIC DNA]</scope>
    <source>
        <strain>ATCC 35602 / DSM 5306 / Rt17-B1</strain>
    </source>
</reference>
<gene>
    <name evidence="1" type="primary">atpF</name>
    <name type="ordered locus">Fnod_0329</name>
</gene>
<evidence type="ECO:0000255" key="1">
    <source>
        <dbReference type="HAMAP-Rule" id="MF_01398"/>
    </source>
</evidence>
<accession>A7HJW1</accession>
<comment type="function">
    <text evidence="1">F(1)F(0) ATP synthase produces ATP from ADP in the presence of a proton or sodium gradient. F-type ATPases consist of two structural domains, F(1) containing the extramembraneous catalytic core and F(0) containing the membrane proton channel, linked together by a central stalk and a peripheral stalk. During catalysis, ATP synthesis in the catalytic domain of F(1) is coupled via a rotary mechanism of the central stalk subunits to proton translocation.</text>
</comment>
<comment type="function">
    <text evidence="1">Component of the F(0) channel, it forms part of the peripheral stalk, linking F(1) to F(0).</text>
</comment>
<comment type="subunit">
    <text evidence="1">F-type ATPases have 2 components, F(1) - the catalytic core - and F(0) - the membrane proton channel. F(1) has five subunits: alpha(3), beta(3), gamma(1), delta(1), epsilon(1). F(0) has three main subunits: a(1), b(2) and c(10-14). The alpha and beta chains form an alternating ring which encloses part of the gamma chain. F(1) is attached to F(0) by a central stalk formed by the gamma and epsilon chains, while a peripheral stalk is formed by the delta and b chains.</text>
</comment>
<comment type="subcellular location">
    <subcellularLocation>
        <location evidence="1">Cell inner membrane</location>
        <topology evidence="1">Single-pass membrane protein</topology>
    </subcellularLocation>
</comment>
<comment type="similarity">
    <text evidence="1">Belongs to the ATPase B chain family.</text>
</comment>
<dbReference type="EMBL" id="CP000771">
    <property type="protein sequence ID" value="ABS60194.1"/>
    <property type="molecule type" value="Genomic_DNA"/>
</dbReference>
<dbReference type="RefSeq" id="WP_011993515.1">
    <property type="nucleotide sequence ID" value="NC_009718.1"/>
</dbReference>
<dbReference type="SMR" id="A7HJW1"/>
<dbReference type="STRING" id="381764.Fnod_0329"/>
<dbReference type="KEGG" id="fno:Fnod_0329"/>
<dbReference type="eggNOG" id="COG0711">
    <property type="taxonomic scope" value="Bacteria"/>
</dbReference>
<dbReference type="HOGENOM" id="CLU_079215_4_5_0"/>
<dbReference type="OrthoDB" id="47427at2"/>
<dbReference type="Proteomes" id="UP000002415">
    <property type="component" value="Chromosome"/>
</dbReference>
<dbReference type="GO" id="GO:0005886">
    <property type="term" value="C:plasma membrane"/>
    <property type="evidence" value="ECO:0007669"/>
    <property type="project" value="UniProtKB-SubCell"/>
</dbReference>
<dbReference type="GO" id="GO:0045259">
    <property type="term" value="C:proton-transporting ATP synthase complex"/>
    <property type="evidence" value="ECO:0007669"/>
    <property type="project" value="UniProtKB-KW"/>
</dbReference>
<dbReference type="GO" id="GO:0046933">
    <property type="term" value="F:proton-transporting ATP synthase activity, rotational mechanism"/>
    <property type="evidence" value="ECO:0007669"/>
    <property type="project" value="UniProtKB-UniRule"/>
</dbReference>
<dbReference type="GO" id="GO:0046961">
    <property type="term" value="F:proton-transporting ATPase activity, rotational mechanism"/>
    <property type="evidence" value="ECO:0007669"/>
    <property type="project" value="TreeGrafter"/>
</dbReference>
<dbReference type="CDD" id="cd06503">
    <property type="entry name" value="ATP-synt_Fo_b"/>
    <property type="match status" value="1"/>
</dbReference>
<dbReference type="Gene3D" id="1.20.5.620">
    <property type="entry name" value="F1F0 ATP synthase subunit B, membrane domain"/>
    <property type="match status" value="1"/>
</dbReference>
<dbReference type="HAMAP" id="MF_01398">
    <property type="entry name" value="ATP_synth_b_bprime"/>
    <property type="match status" value="1"/>
</dbReference>
<dbReference type="InterPro" id="IPR028987">
    <property type="entry name" value="ATP_synth_B-like_membr_sf"/>
</dbReference>
<dbReference type="InterPro" id="IPR002146">
    <property type="entry name" value="ATP_synth_b/b'su_bac/chlpt"/>
</dbReference>
<dbReference type="InterPro" id="IPR005864">
    <property type="entry name" value="ATP_synth_F0_bsu_bac"/>
</dbReference>
<dbReference type="InterPro" id="IPR050059">
    <property type="entry name" value="ATP_synthase_B_chain"/>
</dbReference>
<dbReference type="NCBIfam" id="TIGR01144">
    <property type="entry name" value="ATP_synt_b"/>
    <property type="match status" value="1"/>
</dbReference>
<dbReference type="PANTHER" id="PTHR33445:SF1">
    <property type="entry name" value="ATP SYNTHASE SUBUNIT B"/>
    <property type="match status" value="1"/>
</dbReference>
<dbReference type="PANTHER" id="PTHR33445">
    <property type="entry name" value="ATP SYNTHASE SUBUNIT B', CHLOROPLASTIC"/>
    <property type="match status" value="1"/>
</dbReference>
<dbReference type="Pfam" id="PF00430">
    <property type="entry name" value="ATP-synt_B"/>
    <property type="match status" value="1"/>
</dbReference>
<dbReference type="SUPFAM" id="SSF81573">
    <property type="entry name" value="F1F0 ATP synthase subunit B, membrane domain"/>
    <property type="match status" value="1"/>
</dbReference>
<protein>
    <recommendedName>
        <fullName evidence="1">ATP synthase subunit b</fullName>
    </recommendedName>
    <alternativeName>
        <fullName evidence="1">ATP synthase F(0) sector subunit b</fullName>
    </alternativeName>
    <alternativeName>
        <fullName evidence="1">ATPase subunit I</fullName>
    </alternativeName>
    <alternativeName>
        <fullName evidence="1">F-type ATPase subunit b</fullName>
        <shortName evidence="1">F-ATPase subunit b</shortName>
    </alternativeName>
</protein>
<organism>
    <name type="scientific">Fervidobacterium nodosum (strain ATCC 35602 / DSM 5306 / Rt17-B1)</name>
    <dbReference type="NCBI Taxonomy" id="381764"/>
    <lineage>
        <taxon>Bacteria</taxon>
        <taxon>Thermotogati</taxon>
        <taxon>Thermotogota</taxon>
        <taxon>Thermotogae</taxon>
        <taxon>Thermotogales</taxon>
        <taxon>Fervidobacteriaceae</taxon>
        <taxon>Fervidobacterium</taxon>
    </lineage>
</organism>
<proteinExistence type="inferred from homology"/>
<feature type="chain" id="PRO_0000368484" description="ATP synthase subunit b">
    <location>
        <begin position="1"/>
        <end position="161"/>
    </location>
</feature>
<feature type="transmembrane region" description="Helical" evidence="1">
    <location>
        <begin position="10"/>
        <end position="29"/>
    </location>
</feature>
<name>ATPF_FERNB</name>
<keyword id="KW-0066">ATP synthesis</keyword>
<keyword id="KW-0997">Cell inner membrane</keyword>
<keyword id="KW-1003">Cell membrane</keyword>
<keyword id="KW-0138">CF(0)</keyword>
<keyword id="KW-0375">Hydrogen ion transport</keyword>
<keyword id="KW-0406">Ion transport</keyword>
<keyword id="KW-0472">Membrane</keyword>
<keyword id="KW-1185">Reference proteome</keyword>
<keyword id="KW-0812">Transmembrane</keyword>
<keyword id="KW-1133">Transmembrane helix</keyword>
<keyword id="KW-0813">Transport</keyword>